<sequence length="352" mass="40436">MDYQVSSPTYDIDYYTSGPCQKINVKQIAARLLPPLYSLVFIFGFVGNMLVILILINCKRLKSMTDIYLLNLAISDLFFLLTVPFWAHYAAAQWDFGNTMCQLLTGLYFIGFFSGIFFIILLTIDRYLAIVHAVFALKARTVTFGVVTSVITWVVAVFASLPGIIFTRSQKEGLHYTCSSHFPYSQYQFWKNFQTLKIVILGLVLPLLVMVICYSGILKTLLRCRNEKKRHRAVRLIFTIMIVYFLFWAPYNIVLLLNTFQEFFGLNNCSSSNRLDQAMQVTETLGMTHCCINPIIYAFVGEKFRNYLLVFFQKHIAKHFCKCCSIFQQEAPERASSVYTRSTGEQEISVGL</sequence>
<feature type="chain" id="PRO_0000069259" description="C-C chemokine receptor type 5">
    <location>
        <begin position="1"/>
        <end position="352"/>
    </location>
</feature>
<feature type="topological domain" description="Extracellular" evidence="3">
    <location>
        <begin position="1"/>
        <end position="30"/>
    </location>
</feature>
<feature type="transmembrane region" description="Helical; Name=1" evidence="3">
    <location>
        <begin position="31"/>
        <end position="58"/>
    </location>
</feature>
<feature type="topological domain" description="Cytoplasmic" evidence="3">
    <location>
        <begin position="59"/>
        <end position="68"/>
    </location>
</feature>
<feature type="transmembrane region" description="Helical; Name=2" evidence="3">
    <location>
        <begin position="69"/>
        <end position="89"/>
    </location>
</feature>
<feature type="topological domain" description="Extracellular" evidence="3">
    <location>
        <begin position="90"/>
        <end position="102"/>
    </location>
</feature>
<feature type="transmembrane region" description="Helical; Name=3" evidence="3">
    <location>
        <begin position="103"/>
        <end position="124"/>
    </location>
</feature>
<feature type="topological domain" description="Cytoplasmic" evidence="3">
    <location>
        <begin position="125"/>
        <end position="141"/>
    </location>
</feature>
<feature type="transmembrane region" description="Helical; Name=4" evidence="3">
    <location>
        <begin position="142"/>
        <end position="166"/>
    </location>
</feature>
<feature type="topological domain" description="Extracellular" evidence="3">
    <location>
        <begin position="167"/>
        <end position="198"/>
    </location>
</feature>
<feature type="transmembrane region" description="Helical; Name=5" evidence="3">
    <location>
        <begin position="199"/>
        <end position="218"/>
    </location>
</feature>
<feature type="topological domain" description="Cytoplasmic" evidence="3">
    <location>
        <begin position="219"/>
        <end position="235"/>
    </location>
</feature>
<feature type="transmembrane region" description="Helical; Name=6" evidence="3">
    <location>
        <begin position="236"/>
        <end position="260"/>
    </location>
</feature>
<feature type="topological domain" description="Extracellular" evidence="3">
    <location>
        <begin position="261"/>
        <end position="277"/>
    </location>
</feature>
<feature type="transmembrane region" description="Helical; Name=7" evidence="3">
    <location>
        <begin position="278"/>
        <end position="301"/>
    </location>
</feature>
<feature type="topological domain" description="Cytoplasmic" evidence="3">
    <location>
        <begin position="302"/>
        <end position="352"/>
    </location>
</feature>
<feature type="modified residue" description="Sulfotyrosine" evidence="1">
    <location>
        <position position="3"/>
    </location>
</feature>
<feature type="modified residue" description="Sulfotyrosine" evidence="3">
    <location>
        <position position="10"/>
    </location>
</feature>
<feature type="modified residue" description="Sulfotyrosine" evidence="3">
    <location>
        <position position="14"/>
    </location>
</feature>
<feature type="modified residue" description="Sulfotyrosine" evidence="3">
    <location>
        <position position="15"/>
    </location>
</feature>
<feature type="modified residue" description="Phosphoserine; by BARK1" evidence="1">
    <location>
        <position position="336"/>
    </location>
</feature>
<feature type="modified residue" description="Phosphoserine; by BARK1" evidence="1">
    <location>
        <position position="337"/>
    </location>
</feature>
<feature type="modified residue" description="Phosphoserine; by BARK1" evidence="1">
    <location>
        <position position="342"/>
    </location>
</feature>
<feature type="modified residue" description="Phosphoserine; by BARK1" evidence="1">
    <location>
        <position position="349"/>
    </location>
</feature>
<feature type="lipid moiety-binding region" description="S-palmitoyl cysteine" evidence="1">
    <location>
        <position position="321"/>
    </location>
</feature>
<feature type="lipid moiety-binding region" description="S-palmitoyl cysteine" evidence="1">
    <location>
        <position position="323"/>
    </location>
</feature>
<feature type="lipid moiety-binding region" description="S-palmitoyl cysteine" evidence="1">
    <location>
        <position position="324"/>
    </location>
</feature>
<feature type="glycosylation site" description="O-linked (GalNAc...) serine" evidence="1">
    <location>
        <position position="6"/>
    </location>
</feature>
<feature type="glycosylation site" description="O-linked (GalNAc...) serine" evidence="1">
    <location>
        <position position="7"/>
    </location>
</feature>
<feature type="disulfide bond" evidence="1">
    <location>
        <begin position="20"/>
        <end position="269"/>
    </location>
</feature>
<feature type="disulfide bond" evidence="4">
    <location>
        <begin position="101"/>
        <end position="178"/>
    </location>
</feature>
<comment type="function">
    <text evidence="1">Receptor for a number of inflammatory CC-chemokines including CCL3/MIP-1-alpha, CCL4/MIP-1-beta and RANTES and subsequently transduces a signal by increasing the intracellular calcium ion level. May play a role in the control of granulocytic lineage proliferation or differentiation. Participates in T-lymphocyte migration to the infection site by acting as a chemotactic receptor.</text>
</comment>
<comment type="subunit">
    <text evidence="1">Interacts with PRAF2. Efficient ligand binding to CCL3/MIP-1alpha and CCL4/MIP-1beta requires sulfation, O-glycosylation and sialic acid modifications. Glycosylation on Ser-6 is required for efficient binding of CCL4. Interacts with GRK2. Interacts with ARRB1 and ARRB2. Interacts with CNIH4. Interacts with S100A4; this interaction stimulates T-lymphocyte chemotaxis.</text>
</comment>
<comment type="subcellular location">
    <subcellularLocation>
        <location evidence="2">Cell membrane</location>
        <topology evidence="2">Multi-pass membrane protein</topology>
    </subcellularLocation>
</comment>
<comment type="PTM">
    <text evidence="1">Sulfated on at least 2 of the N-terminal tyrosines. Sulfation is required for efficient binding of the chemokines, CCL3 and CCL4 (By similarity).</text>
</comment>
<comment type="PTM">
    <text evidence="1">Palmitoylation in the C-terminal is important for cell surface expression.</text>
</comment>
<comment type="PTM">
    <text evidence="1">Phosphorylation on serine residues in the C-terminal is stimulated by binding CC chemokines especially by APO-RANTES.</text>
</comment>
<comment type="PTM">
    <text evidence="1">O-glycosylated, but not N-glycosylated. Ser-6 appears to be the major site even if Ser-7 may be also O-glycosylated. Also sialylated glycans present which contribute to chemokine binding. Thr-16 and Ser-17 may also be glycosylated and, if so, with small moieties such as a T-antigen.</text>
</comment>
<comment type="similarity">
    <text evidence="4">Belongs to the G-protein coupled receptor 1 family.</text>
</comment>
<gene>
    <name type="primary">CCR5</name>
    <name type="synonym">CMKBR5</name>
</gene>
<protein>
    <recommendedName>
        <fullName>C-C chemokine receptor type 5</fullName>
        <shortName>C-C CKR-5</shortName>
        <shortName>CC-CKR-5</shortName>
        <shortName>CCR-5</shortName>
        <shortName>CCR5</shortName>
    </recommendedName>
    <cdAntigenName>CD195</cdAntigenName>
</protein>
<evidence type="ECO:0000250" key="1">
    <source>
        <dbReference type="UniProtKB" id="P51681"/>
    </source>
</evidence>
<evidence type="ECO:0000250" key="2">
    <source>
        <dbReference type="UniProtKB" id="Q9XT76"/>
    </source>
</evidence>
<evidence type="ECO:0000255" key="3"/>
<evidence type="ECO:0000255" key="4">
    <source>
        <dbReference type="PROSITE-ProRule" id="PRU00521"/>
    </source>
</evidence>
<accession>Q95NC0</accession>
<organism>
    <name type="scientific">Hylobates moloch</name>
    <name type="common">Silvery gibbon</name>
    <dbReference type="NCBI Taxonomy" id="81572"/>
    <lineage>
        <taxon>Eukaryota</taxon>
        <taxon>Metazoa</taxon>
        <taxon>Chordata</taxon>
        <taxon>Craniata</taxon>
        <taxon>Vertebrata</taxon>
        <taxon>Euteleostomi</taxon>
        <taxon>Mammalia</taxon>
        <taxon>Eutheria</taxon>
        <taxon>Euarchontoglires</taxon>
        <taxon>Primates</taxon>
        <taxon>Haplorrhini</taxon>
        <taxon>Catarrhini</taxon>
        <taxon>Hylobatidae</taxon>
        <taxon>Hylobates</taxon>
    </lineage>
</organism>
<name>CCR5_HYLML</name>
<reference key="1">
    <citation type="journal article" date="1999" name="Mol. Biol. Evol.">
        <title>Sequence evolution of the CCR5 chemokine receptor gene in primates.</title>
        <authorList>
            <person name="Zhang Y.-W."/>
            <person name="Ryder O.A."/>
            <person name="Zhang Y.-P."/>
        </authorList>
    </citation>
    <scope>NUCLEOTIDE SEQUENCE [GENOMIC DNA]</scope>
</reference>
<dbReference type="EMBL" id="AF177899">
    <property type="protein sequence ID" value="AAK43382.1"/>
    <property type="molecule type" value="Genomic_DNA"/>
</dbReference>
<dbReference type="SMR" id="Q95NC0"/>
<dbReference type="GlyCosmos" id="Q95NC0">
    <property type="glycosylation" value="2 sites, No reported glycans"/>
</dbReference>
<dbReference type="GO" id="GO:0005737">
    <property type="term" value="C:cytoplasm"/>
    <property type="evidence" value="ECO:0007669"/>
    <property type="project" value="TreeGrafter"/>
</dbReference>
<dbReference type="GO" id="GO:0009897">
    <property type="term" value="C:external side of plasma membrane"/>
    <property type="evidence" value="ECO:0000250"/>
    <property type="project" value="UniProtKB"/>
</dbReference>
<dbReference type="GO" id="GO:0016493">
    <property type="term" value="F:C-C chemokine receptor activity"/>
    <property type="evidence" value="ECO:0000250"/>
    <property type="project" value="UniProtKB"/>
</dbReference>
<dbReference type="GO" id="GO:0071791">
    <property type="term" value="F:chemokine (C-C motif) ligand 5 binding"/>
    <property type="evidence" value="ECO:0007669"/>
    <property type="project" value="TreeGrafter"/>
</dbReference>
<dbReference type="GO" id="GO:0019722">
    <property type="term" value="P:calcium-mediated signaling"/>
    <property type="evidence" value="ECO:0007669"/>
    <property type="project" value="TreeGrafter"/>
</dbReference>
<dbReference type="GO" id="GO:0060326">
    <property type="term" value="P:cell chemotaxis"/>
    <property type="evidence" value="ECO:0007669"/>
    <property type="project" value="TreeGrafter"/>
</dbReference>
<dbReference type="GO" id="GO:0006955">
    <property type="term" value="P:immune response"/>
    <property type="evidence" value="ECO:0007669"/>
    <property type="project" value="InterPro"/>
</dbReference>
<dbReference type="GO" id="GO:0006954">
    <property type="term" value="P:inflammatory response"/>
    <property type="evidence" value="ECO:0007669"/>
    <property type="project" value="InterPro"/>
</dbReference>
<dbReference type="GO" id="GO:0007204">
    <property type="term" value="P:positive regulation of cytosolic calcium ion concentration"/>
    <property type="evidence" value="ECO:0007669"/>
    <property type="project" value="TreeGrafter"/>
</dbReference>
<dbReference type="CDD" id="cd15184">
    <property type="entry name" value="7tmA_CCR5_CCR2"/>
    <property type="match status" value="1"/>
</dbReference>
<dbReference type="FunFam" id="1.20.1070.10:FF:000026">
    <property type="entry name" value="C-C chemokine receptor type 5"/>
    <property type="match status" value="1"/>
</dbReference>
<dbReference type="Gene3D" id="1.20.1070.10">
    <property type="entry name" value="Rhodopsin 7-helix transmembrane proteins"/>
    <property type="match status" value="1"/>
</dbReference>
<dbReference type="InterPro" id="IPR050119">
    <property type="entry name" value="CCR1-9-like"/>
</dbReference>
<dbReference type="InterPro" id="IPR002240">
    <property type="entry name" value="Chemokine_CCR5"/>
</dbReference>
<dbReference type="InterPro" id="IPR000355">
    <property type="entry name" value="Chemokine_rcpt"/>
</dbReference>
<dbReference type="InterPro" id="IPR000276">
    <property type="entry name" value="GPCR_Rhodpsn"/>
</dbReference>
<dbReference type="InterPro" id="IPR017452">
    <property type="entry name" value="GPCR_Rhodpsn_7TM"/>
</dbReference>
<dbReference type="PANTHER" id="PTHR10489:SF686">
    <property type="entry name" value="C-C CHEMOKINE RECEPTOR TYPE 5"/>
    <property type="match status" value="1"/>
</dbReference>
<dbReference type="PANTHER" id="PTHR10489">
    <property type="entry name" value="CELL ADHESION MOLECULE"/>
    <property type="match status" value="1"/>
</dbReference>
<dbReference type="Pfam" id="PF00001">
    <property type="entry name" value="7tm_1"/>
    <property type="match status" value="1"/>
</dbReference>
<dbReference type="PRINTS" id="PR00657">
    <property type="entry name" value="CCCHEMOKINER"/>
</dbReference>
<dbReference type="PRINTS" id="PR01110">
    <property type="entry name" value="CHEMOKINER5"/>
</dbReference>
<dbReference type="PRINTS" id="PR00237">
    <property type="entry name" value="GPCRRHODOPSN"/>
</dbReference>
<dbReference type="SUPFAM" id="SSF81321">
    <property type="entry name" value="Family A G protein-coupled receptor-like"/>
    <property type="match status" value="1"/>
</dbReference>
<dbReference type="PROSITE" id="PS00237">
    <property type="entry name" value="G_PROTEIN_RECEP_F1_1"/>
    <property type="match status" value="1"/>
</dbReference>
<dbReference type="PROSITE" id="PS50262">
    <property type="entry name" value="G_PROTEIN_RECEP_F1_2"/>
    <property type="match status" value="1"/>
</dbReference>
<proteinExistence type="inferred from homology"/>
<keyword id="KW-1003">Cell membrane</keyword>
<keyword id="KW-1015">Disulfide bond</keyword>
<keyword id="KW-0297">G-protein coupled receptor</keyword>
<keyword id="KW-0325">Glycoprotein</keyword>
<keyword id="KW-0449">Lipoprotein</keyword>
<keyword id="KW-0472">Membrane</keyword>
<keyword id="KW-0564">Palmitate</keyword>
<keyword id="KW-0597">Phosphoprotein</keyword>
<keyword id="KW-0675">Receptor</keyword>
<keyword id="KW-0765">Sulfation</keyword>
<keyword id="KW-0807">Transducer</keyword>
<keyword id="KW-0812">Transmembrane</keyword>
<keyword id="KW-1133">Transmembrane helix</keyword>